<keyword id="KW-0378">Hydrolase</keyword>
<keyword id="KW-0441">Lipid A biosynthesis</keyword>
<keyword id="KW-0444">Lipid biosynthesis</keyword>
<keyword id="KW-0443">Lipid metabolism</keyword>
<keyword id="KW-0479">Metal-binding</keyword>
<keyword id="KW-0862">Zinc</keyword>
<proteinExistence type="inferred from homology"/>
<protein>
    <recommendedName>
        <fullName evidence="1">UDP-3-O-acyl-N-acetylglucosamine deacetylase</fullName>
        <shortName evidence="1">UDP-3-O-acyl-GlcNAc deacetylase</shortName>
        <ecNumber evidence="1">3.5.1.108</ecNumber>
    </recommendedName>
    <alternativeName>
        <fullName evidence="1">UDP-3-O-[R-3-hydroxymyristoyl]-N-acetylglucosamine deacetylase</fullName>
    </alternativeName>
</protein>
<organism>
    <name type="scientific">Vibrio vulnificus (strain CMCP6)</name>
    <dbReference type="NCBI Taxonomy" id="216895"/>
    <lineage>
        <taxon>Bacteria</taxon>
        <taxon>Pseudomonadati</taxon>
        <taxon>Pseudomonadota</taxon>
        <taxon>Gammaproteobacteria</taxon>
        <taxon>Vibrionales</taxon>
        <taxon>Vibrionaceae</taxon>
        <taxon>Vibrio</taxon>
    </lineage>
</organism>
<accession>Q8DEL6</accession>
<sequence>MIRQRTLKEIVKTTGVGLHSGRKVTLTLRPAAANTGIIYRRTDLTPAVDFPADPASVRDTMLCTALVNDEGVRISTVEHLNAALAGMGIDNIIIEVDAPEIPIMDGSASPFVYLLQQAGIETQNAAKRFIRIKKPVRFEDGDKWAEFVPFNGFRMDFEIEFNHPAIDSDEQRLLFDFSTQGFVREISRARTFGFMRDIEYLQSQNLVLGGSFDNAIVLDDYRILNEEGLRFENEFVTHKVLDAIGDLYMCGHAIIGEFRAYKSGHGLNNQLLRAVLADQEAWEWTTFEEEVGSPVAFAEPNMVLA</sequence>
<name>LPXC_VIBVU</name>
<feature type="chain" id="PRO_0000191964" description="UDP-3-O-acyl-N-acetylglucosamine deacetylase">
    <location>
        <begin position="1"/>
        <end position="305"/>
    </location>
</feature>
<feature type="active site" description="Proton donor" evidence="1">
    <location>
        <position position="265"/>
    </location>
</feature>
<feature type="binding site" evidence="1">
    <location>
        <position position="79"/>
    </location>
    <ligand>
        <name>Zn(2+)</name>
        <dbReference type="ChEBI" id="CHEBI:29105"/>
    </ligand>
</feature>
<feature type="binding site" evidence="1">
    <location>
        <position position="238"/>
    </location>
    <ligand>
        <name>Zn(2+)</name>
        <dbReference type="ChEBI" id="CHEBI:29105"/>
    </ligand>
</feature>
<feature type="binding site" evidence="1">
    <location>
        <position position="242"/>
    </location>
    <ligand>
        <name>Zn(2+)</name>
        <dbReference type="ChEBI" id="CHEBI:29105"/>
    </ligand>
</feature>
<evidence type="ECO:0000255" key="1">
    <source>
        <dbReference type="HAMAP-Rule" id="MF_00388"/>
    </source>
</evidence>
<dbReference type="EC" id="3.5.1.108" evidence="1"/>
<dbReference type="EMBL" id="AE016795">
    <property type="protein sequence ID" value="AAO09088.1"/>
    <property type="molecule type" value="Genomic_DNA"/>
</dbReference>
<dbReference type="RefSeq" id="WP_011078658.1">
    <property type="nucleotide sequence ID" value="NC_004459.3"/>
</dbReference>
<dbReference type="SMR" id="Q8DEL6"/>
<dbReference type="KEGG" id="vvu:VV1_0571"/>
<dbReference type="HOGENOM" id="CLU_046528_1_0_6"/>
<dbReference type="UniPathway" id="UPA00359">
    <property type="reaction ID" value="UER00478"/>
</dbReference>
<dbReference type="Proteomes" id="UP000002275">
    <property type="component" value="Chromosome 1"/>
</dbReference>
<dbReference type="GO" id="GO:0016020">
    <property type="term" value="C:membrane"/>
    <property type="evidence" value="ECO:0007669"/>
    <property type="project" value="GOC"/>
</dbReference>
<dbReference type="GO" id="GO:0046872">
    <property type="term" value="F:metal ion binding"/>
    <property type="evidence" value="ECO:0007669"/>
    <property type="project" value="UniProtKB-KW"/>
</dbReference>
<dbReference type="GO" id="GO:0103117">
    <property type="term" value="F:UDP-3-O-acyl-N-acetylglucosamine deacetylase activity"/>
    <property type="evidence" value="ECO:0007669"/>
    <property type="project" value="UniProtKB-UniRule"/>
</dbReference>
<dbReference type="GO" id="GO:0009245">
    <property type="term" value="P:lipid A biosynthetic process"/>
    <property type="evidence" value="ECO:0007669"/>
    <property type="project" value="UniProtKB-UniRule"/>
</dbReference>
<dbReference type="FunFam" id="3.30.1700.10:FF:000001">
    <property type="entry name" value="UDP-3-O-acyl-N-acetylglucosamine deacetylase"/>
    <property type="match status" value="1"/>
</dbReference>
<dbReference type="FunFam" id="3.30.230.20:FF:000001">
    <property type="entry name" value="UDP-3-O-acyl-N-acetylglucosamine deacetylase"/>
    <property type="match status" value="1"/>
</dbReference>
<dbReference type="Gene3D" id="3.30.230.20">
    <property type="entry name" value="lpxc deacetylase, domain 1"/>
    <property type="match status" value="1"/>
</dbReference>
<dbReference type="Gene3D" id="3.30.1700.10">
    <property type="entry name" value="lpxc deacetylase, domain 2"/>
    <property type="match status" value="1"/>
</dbReference>
<dbReference type="HAMAP" id="MF_00388">
    <property type="entry name" value="LpxC"/>
    <property type="match status" value="1"/>
</dbReference>
<dbReference type="InterPro" id="IPR020568">
    <property type="entry name" value="Ribosomal_Su5_D2-typ_SF"/>
</dbReference>
<dbReference type="InterPro" id="IPR004463">
    <property type="entry name" value="UDP-acyl_GlcNac_deAcase"/>
</dbReference>
<dbReference type="InterPro" id="IPR011334">
    <property type="entry name" value="UDP-acyl_GlcNac_deAcase_C"/>
</dbReference>
<dbReference type="InterPro" id="IPR015870">
    <property type="entry name" value="UDP-acyl_N-AcGlcN_deAcase_N"/>
</dbReference>
<dbReference type="NCBIfam" id="TIGR00325">
    <property type="entry name" value="lpxC"/>
    <property type="match status" value="1"/>
</dbReference>
<dbReference type="PANTHER" id="PTHR33694">
    <property type="entry name" value="UDP-3-O-ACYL-N-ACETYLGLUCOSAMINE DEACETYLASE 1, MITOCHONDRIAL-RELATED"/>
    <property type="match status" value="1"/>
</dbReference>
<dbReference type="PANTHER" id="PTHR33694:SF1">
    <property type="entry name" value="UDP-3-O-ACYL-N-ACETYLGLUCOSAMINE DEACETYLASE 1, MITOCHONDRIAL-RELATED"/>
    <property type="match status" value="1"/>
</dbReference>
<dbReference type="Pfam" id="PF03331">
    <property type="entry name" value="LpxC"/>
    <property type="match status" value="1"/>
</dbReference>
<dbReference type="SUPFAM" id="SSF54211">
    <property type="entry name" value="Ribosomal protein S5 domain 2-like"/>
    <property type="match status" value="2"/>
</dbReference>
<gene>
    <name evidence="1" type="primary">lpxC</name>
    <name type="ordered locus">VV1_0571</name>
</gene>
<reference key="1">
    <citation type="submission" date="2002-12" db="EMBL/GenBank/DDBJ databases">
        <title>Complete genome sequence of Vibrio vulnificus CMCP6.</title>
        <authorList>
            <person name="Rhee J.H."/>
            <person name="Kim S.Y."/>
            <person name="Chung S.S."/>
            <person name="Kim J.J."/>
            <person name="Moon Y.H."/>
            <person name="Jeong H."/>
            <person name="Choy H.E."/>
        </authorList>
    </citation>
    <scope>NUCLEOTIDE SEQUENCE [LARGE SCALE GENOMIC DNA]</scope>
    <source>
        <strain>CMCP6</strain>
    </source>
</reference>
<comment type="function">
    <text evidence="1">Catalyzes the hydrolysis of UDP-3-O-myristoyl-N-acetylglucosamine to form UDP-3-O-myristoylglucosamine and acetate, the committed step in lipid A biosynthesis.</text>
</comment>
<comment type="catalytic activity">
    <reaction evidence="1">
        <text>a UDP-3-O-[(3R)-3-hydroxyacyl]-N-acetyl-alpha-D-glucosamine + H2O = a UDP-3-O-[(3R)-3-hydroxyacyl]-alpha-D-glucosamine + acetate</text>
        <dbReference type="Rhea" id="RHEA:67816"/>
        <dbReference type="ChEBI" id="CHEBI:15377"/>
        <dbReference type="ChEBI" id="CHEBI:30089"/>
        <dbReference type="ChEBI" id="CHEBI:137740"/>
        <dbReference type="ChEBI" id="CHEBI:173225"/>
        <dbReference type="EC" id="3.5.1.108"/>
    </reaction>
</comment>
<comment type="cofactor">
    <cofactor evidence="1">
        <name>Zn(2+)</name>
        <dbReference type="ChEBI" id="CHEBI:29105"/>
    </cofactor>
</comment>
<comment type="pathway">
    <text evidence="1">Glycolipid biosynthesis; lipid IV(A) biosynthesis; lipid IV(A) from (3R)-3-hydroxytetradecanoyl-[acyl-carrier-protein] and UDP-N-acetyl-alpha-D-glucosamine: step 2/6.</text>
</comment>
<comment type="similarity">
    <text evidence="1">Belongs to the LpxC family.</text>
</comment>